<accession>B1YWD5</accession>
<evidence type="ECO:0000255" key="1">
    <source>
        <dbReference type="HAMAP-Rule" id="MF_00607"/>
    </source>
</evidence>
<organism>
    <name type="scientific">Burkholderia ambifaria (strain MC40-6)</name>
    <dbReference type="NCBI Taxonomy" id="398577"/>
    <lineage>
        <taxon>Bacteria</taxon>
        <taxon>Pseudomonadati</taxon>
        <taxon>Pseudomonadota</taxon>
        <taxon>Betaproteobacteria</taxon>
        <taxon>Burkholderiales</taxon>
        <taxon>Burkholderiaceae</taxon>
        <taxon>Burkholderia</taxon>
        <taxon>Burkholderia cepacia complex</taxon>
    </lineage>
</organism>
<proteinExistence type="inferred from homology"/>
<feature type="chain" id="PRO_1000130250" description="Ribosomal RNA small subunit methyltransferase A">
    <location>
        <begin position="1"/>
        <end position="273"/>
    </location>
</feature>
<feature type="binding site" evidence="1">
    <location>
        <position position="19"/>
    </location>
    <ligand>
        <name>S-adenosyl-L-methionine</name>
        <dbReference type="ChEBI" id="CHEBI:59789"/>
    </ligand>
</feature>
<feature type="binding site" evidence="1">
    <location>
        <position position="21"/>
    </location>
    <ligand>
        <name>S-adenosyl-L-methionine</name>
        <dbReference type="ChEBI" id="CHEBI:59789"/>
    </ligand>
</feature>
<feature type="binding site" evidence="1">
    <location>
        <position position="46"/>
    </location>
    <ligand>
        <name>S-adenosyl-L-methionine</name>
        <dbReference type="ChEBI" id="CHEBI:59789"/>
    </ligand>
</feature>
<feature type="binding site" evidence="1">
    <location>
        <position position="71"/>
    </location>
    <ligand>
        <name>S-adenosyl-L-methionine</name>
        <dbReference type="ChEBI" id="CHEBI:59789"/>
    </ligand>
</feature>
<feature type="binding site" evidence="1">
    <location>
        <position position="94"/>
    </location>
    <ligand>
        <name>S-adenosyl-L-methionine</name>
        <dbReference type="ChEBI" id="CHEBI:59789"/>
    </ligand>
</feature>
<feature type="binding site" evidence="1">
    <location>
        <position position="117"/>
    </location>
    <ligand>
        <name>S-adenosyl-L-methionine</name>
        <dbReference type="ChEBI" id="CHEBI:59789"/>
    </ligand>
</feature>
<sequence>MSNSRQHQGHFARKRFGQNFLVDHGVIDSIVTTIGPARGQRMVEIGPGLGALTEPLIARLATPESPLHAVELDRDLIGRLQQRFGPLLELHAGDALAFDFRSLAAPGDKPSLRIVGNLPYNISSPLLFHLMTFADAVIDQHFMLQNEVVERMVAEPGTKAFSRLSVMLQYRYVMEKMLDVPPESFQPPPKVDSAIVRMIPYEPHELPDVDPVLLGEVVTAAFSQRRKMLRNTLGDYRETIDFDGLGFDLARRAEDVSVAEYVGVAQALAAVRR</sequence>
<name>RSMA_BURA4</name>
<keyword id="KW-0963">Cytoplasm</keyword>
<keyword id="KW-0489">Methyltransferase</keyword>
<keyword id="KW-0694">RNA-binding</keyword>
<keyword id="KW-0698">rRNA processing</keyword>
<keyword id="KW-0949">S-adenosyl-L-methionine</keyword>
<keyword id="KW-0808">Transferase</keyword>
<gene>
    <name evidence="1" type="primary">rsmA</name>
    <name evidence="1" type="synonym">ksgA</name>
    <name type="ordered locus">BamMC406_2626</name>
</gene>
<protein>
    <recommendedName>
        <fullName evidence="1">Ribosomal RNA small subunit methyltransferase A</fullName>
        <ecNumber evidence="1">2.1.1.182</ecNumber>
    </recommendedName>
    <alternativeName>
        <fullName evidence="1">16S rRNA (adenine(1518)-N(6)/adenine(1519)-N(6))-dimethyltransferase</fullName>
    </alternativeName>
    <alternativeName>
        <fullName evidence="1">16S rRNA dimethyladenosine transferase</fullName>
    </alternativeName>
    <alternativeName>
        <fullName evidence="1">16S rRNA dimethylase</fullName>
    </alternativeName>
    <alternativeName>
        <fullName evidence="1">S-adenosylmethionine-6-N', N'-adenosyl(rRNA) dimethyltransferase</fullName>
    </alternativeName>
</protein>
<comment type="function">
    <text evidence="1">Specifically dimethylates two adjacent adenosines (A1518 and A1519) in the loop of a conserved hairpin near the 3'-end of 16S rRNA in the 30S particle. May play a critical role in biogenesis of 30S subunits.</text>
</comment>
<comment type="catalytic activity">
    <reaction evidence="1">
        <text>adenosine(1518)/adenosine(1519) in 16S rRNA + 4 S-adenosyl-L-methionine = N(6)-dimethyladenosine(1518)/N(6)-dimethyladenosine(1519) in 16S rRNA + 4 S-adenosyl-L-homocysteine + 4 H(+)</text>
        <dbReference type="Rhea" id="RHEA:19609"/>
        <dbReference type="Rhea" id="RHEA-COMP:10232"/>
        <dbReference type="Rhea" id="RHEA-COMP:10233"/>
        <dbReference type="ChEBI" id="CHEBI:15378"/>
        <dbReference type="ChEBI" id="CHEBI:57856"/>
        <dbReference type="ChEBI" id="CHEBI:59789"/>
        <dbReference type="ChEBI" id="CHEBI:74411"/>
        <dbReference type="ChEBI" id="CHEBI:74493"/>
        <dbReference type="EC" id="2.1.1.182"/>
    </reaction>
</comment>
<comment type="subcellular location">
    <subcellularLocation>
        <location evidence="1">Cytoplasm</location>
    </subcellularLocation>
</comment>
<comment type="similarity">
    <text evidence="1">Belongs to the class I-like SAM-binding methyltransferase superfamily. rRNA adenine N(6)-methyltransferase family. RsmA subfamily.</text>
</comment>
<reference key="1">
    <citation type="submission" date="2008-04" db="EMBL/GenBank/DDBJ databases">
        <title>Complete sequence of chromosome 1 of Burkholderia ambifaria MC40-6.</title>
        <authorList>
            <person name="Copeland A."/>
            <person name="Lucas S."/>
            <person name="Lapidus A."/>
            <person name="Glavina del Rio T."/>
            <person name="Dalin E."/>
            <person name="Tice H."/>
            <person name="Pitluck S."/>
            <person name="Chain P."/>
            <person name="Malfatti S."/>
            <person name="Shin M."/>
            <person name="Vergez L."/>
            <person name="Lang D."/>
            <person name="Schmutz J."/>
            <person name="Larimer F."/>
            <person name="Land M."/>
            <person name="Hauser L."/>
            <person name="Kyrpides N."/>
            <person name="Lykidis A."/>
            <person name="Ramette A."/>
            <person name="Konstantinidis K."/>
            <person name="Tiedje J."/>
            <person name="Richardson P."/>
        </authorList>
    </citation>
    <scope>NUCLEOTIDE SEQUENCE [LARGE SCALE GENOMIC DNA]</scope>
    <source>
        <strain>MC40-6</strain>
    </source>
</reference>
<dbReference type="EC" id="2.1.1.182" evidence="1"/>
<dbReference type="EMBL" id="CP001025">
    <property type="protein sequence ID" value="ACB65103.1"/>
    <property type="molecule type" value="Genomic_DNA"/>
</dbReference>
<dbReference type="RefSeq" id="WP_012364673.1">
    <property type="nucleotide sequence ID" value="NC_010551.1"/>
</dbReference>
<dbReference type="SMR" id="B1YWD5"/>
<dbReference type="KEGG" id="bac:BamMC406_2626"/>
<dbReference type="HOGENOM" id="CLU_041220_0_1_4"/>
<dbReference type="OrthoDB" id="9814755at2"/>
<dbReference type="Proteomes" id="UP000001680">
    <property type="component" value="Chromosome 1"/>
</dbReference>
<dbReference type="GO" id="GO:0005829">
    <property type="term" value="C:cytosol"/>
    <property type="evidence" value="ECO:0007669"/>
    <property type="project" value="TreeGrafter"/>
</dbReference>
<dbReference type="GO" id="GO:0052908">
    <property type="term" value="F:16S rRNA (adenine(1518)-N(6)/adenine(1519)-N(6))-dimethyltransferase activity"/>
    <property type="evidence" value="ECO:0007669"/>
    <property type="project" value="UniProtKB-EC"/>
</dbReference>
<dbReference type="GO" id="GO:0003723">
    <property type="term" value="F:RNA binding"/>
    <property type="evidence" value="ECO:0007669"/>
    <property type="project" value="UniProtKB-KW"/>
</dbReference>
<dbReference type="FunFam" id="1.10.8.100:FF:000001">
    <property type="entry name" value="Ribosomal RNA small subunit methyltransferase A"/>
    <property type="match status" value="1"/>
</dbReference>
<dbReference type="Gene3D" id="1.10.8.100">
    <property type="entry name" value="Ribosomal RNA adenine dimethylase-like, domain 2"/>
    <property type="match status" value="1"/>
</dbReference>
<dbReference type="Gene3D" id="3.40.50.150">
    <property type="entry name" value="Vaccinia Virus protein VP39"/>
    <property type="match status" value="1"/>
</dbReference>
<dbReference type="HAMAP" id="MF_00607">
    <property type="entry name" value="16SrRNA_methyltr_A"/>
    <property type="match status" value="1"/>
</dbReference>
<dbReference type="InterPro" id="IPR001737">
    <property type="entry name" value="KsgA/Erm"/>
</dbReference>
<dbReference type="InterPro" id="IPR023165">
    <property type="entry name" value="rRNA_Ade_diMease-like_C"/>
</dbReference>
<dbReference type="InterPro" id="IPR020598">
    <property type="entry name" value="rRNA_Ade_methylase_Trfase_N"/>
</dbReference>
<dbReference type="InterPro" id="IPR011530">
    <property type="entry name" value="rRNA_adenine_dimethylase"/>
</dbReference>
<dbReference type="InterPro" id="IPR029063">
    <property type="entry name" value="SAM-dependent_MTases_sf"/>
</dbReference>
<dbReference type="NCBIfam" id="TIGR00755">
    <property type="entry name" value="ksgA"/>
    <property type="match status" value="1"/>
</dbReference>
<dbReference type="PANTHER" id="PTHR11727">
    <property type="entry name" value="DIMETHYLADENOSINE TRANSFERASE"/>
    <property type="match status" value="1"/>
</dbReference>
<dbReference type="PANTHER" id="PTHR11727:SF7">
    <property type="entry name" value="DIMETHYLADENOSINE TRANSFERASE-RELATED"/>
    <property type="match status" value="1"/>
</dbReference>
<dbReference type="Pfam" id="PF00398">
    <property type="entry name" value="RrnaAD"/>
    <property type="match status" value="1"/>
</dbReference>
<dbReference type="SMART" id="SM00650">
    <property type="entry name" value="rADc"/>
    <property type="match status" value="1"/>
</dbReference>
<dbReference type="SUPFAM" id="SSF53335">
    <property type="entry name" value="S-adenosyl-L-methionine-dependent methyltransferases"/>
    <property type="match status" value="1"/>
</dbReference>
<dbReference type="PROSITE" id="PS51689">
    <property type="entry name" value="SAM_RNA_A_N6_MT"/>
    <property type="match status" value="1"/>
</dbReference>